<gene>
    <name evidence="1" type="primary">fabV</name>
    <name type="ordered locus">XCC0115</name>
</gene>
<protein>
    <recommendedName>
        <fullName evidence="1">Enoyl-[acyl-carrier-protein] reductase [NADH]</fullName>
        <shortName evidence="1">ENR</shortName>
        <ecNumber evidence="1">1.3.1.9</ecNumber>
    </recommendedName>
</protein>
<dbReference type="EC" id="1.3.1.9" evidence="1"/>
<dbReference type="EMBL" id="AE008922">
    <property type="protein sequence ID" value="AAM39434.1"/>
    <property type="molecule type" value="Genomic_DNA"/>
</dbReference>
<dbReference type="RefSeq" id="NP_635510.1">
    <property type="nucleotide sequence ID" value="NC_003902.1"/>
</dbReference>
<dbReference type="RefSeq" id="WP_011035373.1">
    <property type="nucleotide sequence ID" value="NC_003902.1"/>
</dbReference>
<dbReference type="SMR" id="Q8PE66"/>
<dbReference type="STRING" id="190485.XCC0115"/>
<dbReference type="EnsemblBacteria" id="AAM39434">
    <property type="protein sequence ID" value="AAM39434"/>
    <property type="gene ID" value="XCC0115"/>
</dbReference>
<dbReference type="KEGG" id="xcc:XCC0115"/>
<dbReference type="PATRIC" id="fig|190485.4.peg.128"/>
<dbReference type="eggNOG" id="COG3007">
    <property type="taxonomic scope" value="Bacteria"/>
</dbReference>
<dbReference type="HOGENOM" id="CLU_057698_1_0_6"/>
<dbReference type="OrthoDB" id="9802260at2"/>
<dbReference type="UniPathway" id="UPA00094"/>
<dbReference type="Proteomes" id="UP000001010">
    <property type="component" value="Chromosome"/>
</dbReference>
<dbReference type="GO" id="GO:0004318">
    <property type="term" value="F:enoyl-[acyl-carrier-protein] reductase (NADH) activity"/>
    <property type="evidence" value="ECO:0000318"/>
    <property type="project" value="GO_Central"/>
</dbReference>
<dbReference type="GO" id="GO:0051287">
    <property type="term" value="F:NAD binding"/>
    <property type="evidence" value="ECO:0000318"/>
    <property type="project" value="GO_Central"/>
</dbReference>
<dbReference type="GO" id="GO:0050343">
    <property type="term" value="F:trans-2-enoyl-CoA reductase (NADH) activity"/>
    <property type="evidence" value="ECO:0000318"/>
    <property type="project" value="GO_Central"/>
</dbReference>
<dbReference type="GO" id="GO:0006633">
    <property type="term" value="P:fatty acid biosynthetic process"/>
    <property type="evidence" value="ECO:0000318"/>
    <property type="project" value="GO_Central"/>
</dbReference>
<dbReference type="FunFam" id="3.40.50.720:FF:000221">
    <property type="entry name" value="Enoyl-[acyl-carrier-protein] reductase [NADH]"/>
    <property type="match status" value="1"/>
</dbReference>
<dbReference type="Gene3D" id="3.40.50.720">
    <property type="entry name" value="NAD(P)-binding Rossmann-like Domain"/>
    <property type="match status" value="1"/>
</dbReference>
<dbReference type="HAMAP" id="MF_01838">
    <property type="entry name" value="FabV_reductase"/>
    <property type="match status" value="1"/>
</dbReference>
<dbReference type="InterPro" id="IPR024906">
    <property type="entry name" value="Eno_Rdtase_FAD-bd_dom"/>
</dbReference>
<dbReference type="InterPro" id="IPR024910">
    <property type="entry name" value="Enoyl-CoA_Rdtase_cat_dom"/>
</dbReference>
<dbReference type="InterPro" id="IPR050048">
    <property type="entry name" value="FabV-like_NADH_b"/>
</dbReference>
<dbReference type="InterPro" id="IPR010758">
    <property type="entry name" value="Trans-2-enoyl-CoA_reductase"/>
</dbReference>
<dbReference type="NCBIfam" id="NF043048">
    <property type="entry name" value="EnoyACPredFabV"/>
    <property type="match status" value="1"/>
</dbReference>
<dbReference type="NCBIfam" id="NF010177">
    <property type="entry name" value="PRK13656.1"/>
    <property type="match status" value="1"/>
</dbReference>
<dbReference type="PANTHER" id="PTHR37480">
    <property type="entry name" value="ENOYL-[ACYL-CARRIER-PROTEIN] REDUCTASE [NADH]"/>
    <property type="match status" value="1"/>
</dbReference>
<dbReference type="PANTHER" id="PTHR37480:SF1">
    <property type="entry name" value="ENOYL-[ACYL-CARRIER-PROTEIN] REDUCTASE [NADH]"/>
    <property type="match status" value="1"/>
</dbReference>
<dbReference type="Pfam" id="PF07055">
    <property type="entry name" value="Eno-Rase_FAD_bd"/>
    <property type="match status" value="1"/>
</dbReference>
<dbReference type="Pfam" id="PF12242">
    <property type="entry name" value="Eno-Rase_NADH_b"/>
    <property type="match status" value="1"/>
</dbReference>
<dbReference type="Pfam" id="PF12241">
    <property type="entry name" value="Enoyl_reductase"/>
    <property type="match status" value="1"/>
</dbReference>
<reference key="1">
    <citation type="journal article" date="2002" name="Nature">
        <title>Comparison of the genomes of two Xanthomonas pathogens with differing host specificities.</title>
        <authorList>
            <person name="da Silva A.C.R."/>
            <person name="Ferro J.A."/>
            <person name="Reinach F.C."/>
            <person name="Farah C.S."/>
            <person name="Furlan L.R."/>
            <person name="Quaggio R.B."/>
            <person name="Monteiro-Vitorello C.B."/>
            <person name="Van Sluys M.A."/>
            <person name="Almeida N.F. Jr."/>
            <person name="Alves L.M.C."/>
            <person name="do Amaral A.M."/>
            <person name="Bertolini M.C."/>
            <person name="Camargo L.E.A."/>
            <person name="Camarotte G."/>
            <person name="Cannavan F."/>
            <person name="Cardozo J."/>
            <person name="Chambergo F."/>
            <person name="Ciapina L.P."/>
            <person name="Cicarelli R.M.B."/>
            <person name="Coutinho L.L."/>
            <person name="Cursino-Santos J.R."/>
            <person name="El-Dorry H."/>
            <person name="Faria J.B."/>
            <person name="Ferreira A.J.S."/>
            <person name="Ferreira R.C.C."/>
            <person name="Ferro M.I.T."/>
            <person name="Formighieri E.F."/>
            <person name="Franco M.C."/>
            <person name="Greggio C.C."/>
            <person name="Gruber A."/>
            <person name="Katsuyama A.M."/>
            <person name="Kishi L.T."/>
            <person name="Leite R.P."/>
            <person name="Lemos E.G.M."/>
            <person name="Lemos M.V.F."/>
            <person name="Locali E.C."/>
            <person name="Machado M.A."/>
            <person name="Madeira A.M.B.N."/>
            <person name="Martinez-Rossi N.M."/>
            <person name="Martins E.C."/>
            <person name="Meidanis J."/>
            <person name="Menck C.F.M."/>
            <person name="Miyaki C.Y."/>
            <person name="Moon D.H."/>
            <person name="Moreira L.M."/>
            <person name="Novo M.T.M."/>
            <person name="Okura V.K."/>
            <person name="Oliveira M.C."/>
            <person name="Oliveira V.R."/>
            <person name="Pereira H.A."/>
            <person name="Rossi A."/>
            <person name="Sena J.A.D."/>
            <person name="Silva C."/>
            <person name="de Souza R.F."/>
            <person name="Spinola L.A.F."/>
            <person name="Takita M.A."/>
            <person name="Tamura R.E."/>
            <person name="Teixeira E.C."/>
            <person name="Tezza R.I.D."/>
            <person name="Trindade dos Santos M."/>
            <person name="Truffi D."/>
            <person name="Tsai S.M."/>
            <person name="White F.F."/>
            <person name="Setubal J.C."/>
            <person name="Kitajima J.P."/>
        </authorList>
    </citation>
    <scope>NUCLEOTIDE SEQUENCE [LARGE SCALE GENOMIC DNA]</scope>
    <source>
        <strain>ATCC 33913 / DSM 3586 / NCPPB 528 / LMG 568 / P 25</strain>
    </source>
</reference>
<organism>
    <name type="scientific">Xanthomonas campestris pv. campestris (strain ATCC 33913 / DSM 3586 / NCPPB 528 / LMG 568 / P 25)</name>
    <dbReference type="NCBI Taxonomy" id="190485"/>
    <lineage>
        <taxon>Bacteria</taxon>
        <taxon>Pseudomonadati</taxon>
        <taxon>Pseudomonadota</taxon>
        <taxon>Gammaproteobacteria</taxon>
        <taxon>Lysobacterales</taxon>
        <taxon>Lysobacteraceae</taxon>
        <taxon>Xanthomonas</taxon>
    </lineage>
</organism>
<feature type="chain" id="PRO_0000220060" description="Enoyl-[acyl-carrier-protein] reductase [NADH]">
    <location>
        <begin position="1"/>
        <end position="402"/>
    </location>
</feature>
<feature type="active site" description="Proton donor" evidence="1">
    <location>
        <position position="236"/>
    </location>
</feature>
<feature type="binding site" evidence="1">
    <location>
        <begin position="48"/>
        <end position="53"/>
    </location>
    <ligand>
        <name>NAD(+)</name>
        <dbReference type="ChEBI" id="CHEBI:57540"/>
    </ligand>
</feature>
<feature type="binding site" evidence="1">
    <location>
        <begin position="74"/>
        <end position="75"/>
    </location>
    <ligand>
        <name>NAD(+)</name>
        <dbReference type="ChEBI" id="CHEBI:57540"/>
    </ligand>
</feature>
<feature type="binding site" evidence="1">
    <location>
        <begin position="111"/>
        <end position="112"/>
    </location>
    <ligand>
        <name>NAD(+)</name>
        <dbReference type="ChEBI" id="CHEBI:57540"/>
    </ligand>
</feature>
<feature type="binding site" evidence="1">
    <location>
        <begin position="140"/>
        <end position="141"/>
    </location>
    <ligand>
        <name>NAD(+)</name>
        <dbReference type="ChEBI" id="CHEBI:57540"/>
    </ligand>
</feature>
<feature type="binding site" evidence="1">
    <location>
        <position position="226"/>
    </location>
    <ligand>
        <name>substrate</name>
    </ligand>
</feature>
<feature type="binding site" evidence="1">
    <location>
        <position position="245"/>
    </location>
    <ligand>
        <name>NAD(+)</name>
        <dbReference type="ChEBI" id="CHEBI:57540"/>
    </ligand>
</feature>
<feature type="binding site" evidence="1">
    <location>
        <begin position="274"/>
        <end position="276"/>
    </location>
    <ligand>
        <name>NAD(+)</name>
        <dbReference type="ChEBI" id="CHEBI:57540"/>
    </ligand>
</feature>
<feature type="site" description="Plays an important role in discriminating NADH against NADPH" evidence="1">
    <location>
        <position position="75"/>
    </location>
</feature>
<proteinExistence type="inferred from homology"/>
<name>FABV_XANCP</name>
<evidence type="ECO:0000255" key="1">
    <source>
        <dbReference type="HAMAP-Rule" id="MF_01838"/>
    </source>
</evidence>
<comment type="function">
    <text evidence="1">Involved in the final reduction of the elongation cycle of fatty acid synthesis (FAS II). Catalyzes the reduction of a carbon-carbon double bond in an enoyl moiety that is covalently linked to an acyl carrier protein (ACP).</text>
</comment>
<comment type="catalytic activity">
    <reaction evidence="1">
        <text>a 2,3-saturated acyl-[ACP] + NAD(+) = a (2E)-enoyl-[ACP] + NADH + H(+)</text>
        <dbReference type="Rhea" id="RHEA:10240"/>
        <dbReference type="Rhea" id="RHEA-COMP:9925"/>
        <dbReference type="Rhea" id="RHEA-COMP:9926"/>
        <dbReference type="ChEBI" id="CHEBI:15378"/>
        <dbReference type="ChEBI" id="CHEBI:57540"/>
        <dbReference type="ChEBI" id="CHEBI:57945"/>
        <dbReference type="ChEBI" id="CHEBI:78784"/>
        <dbReference type="ChEBI" id="CHEBI:78785"/>
        <dbReference type="EC" id="1.3.1.9"/>
    </reaction>
</comment>
<comment type="pathway">
    <text evidence="1">Lipid metabolism; fatty acid biosynthesis.</text>
</comment>
<comment type="subunit">
    <text evidence="1">Monomer.</text>
</comment>
<comment type="similarity">
    <text evidence="1">Belongs to the TER reductase family.</text>
</comment>
<accession>Q8PE66</accession>
<keyword id="KW-0275">Fatty acid biosynthesis</keyword>
<keyword id="KW-0276">Fatty acid metabolism</keyword>
<keyword id="KW-0444">Lipid biosynthesis</keyword>
<keyword id="KW-0443">Lipid metabolism</keyword>
<keyword id="KW-0520">NAD</keyword>
<keyword id="KW-0560">Oxidoreductase</keyword>
<keyword id="KW-1185">Reference proteome</keyword>
<sequence length="402" mass="43959">MIIHPKVRGFICTTTHPLGCERNVLDQIAATRARGVRNDGPKKVLVIGASSGYGLASRITAAFGFGADTLGVFFEKPGSDKKAGTAGWYNSAAFDTHAKAAGLYSKSINGDAFSDEARAKVIELIKTDMGGQVDLVVYSLASPVRKLPSTGEVKRSALKPIGNTYTATAIDTNKDTIIQASIEPATEQEIEDTITVMGGQDWELWIDALDSAGVLAKGARSVAFSYIGTEITWPIYWHGALGKAKVDLDHTAQRLDARLQASGGGANVAVLKSVVTQASAAIPVMPLYISMVYKIMKEKGLHEGTIEQLDRLFRERLYREDGQPAEVDEQNRLRLDDWELRDDVQDACKALWPQVTTENLFALTDYAGYKHEFLKLFGFERKDVDYDADVDPDVKFDCIELG</sequence>